<accession>A4WNC4</accession>
<reference key="1">
    <citation type="submission" date="2007-04" db="EMBL/GenBank/DDBJ databases">
        <title>Complete sequence of Pyrobaculum arsenaticum DSM 13514.</title>
        <authorList>
            <consortium name="US DOE Joint Genome Institute"/>
            <person name="Copeland A."/>
            <person name="Lucas S."/>
            <person name="Lapidus A."/>
            <person name="Barry K."/>
            <person name="Glavina del Rio T."/>
            <person name="Dalin E."/>
            <person name="Tice H."/>
            <person name="Pitluck S."/>
            <person name="Chain P."/>
            <person name="Malfatti S."/>
            <person name="Shin M."/>
            <person name="Vergez L."/>
            <person name="Schmutz J."/>
            <person name="Larimer F."/>
            <person name="Land M."/>
            <person name="Hauser L."/>
            <person name="Kyrpides N."/>
            <person name="Mikhailova N."/>
            <person name="Cozen A.E."/>
            <person name="Fitz-Gibbon S.T."/>
            <person name="House C.H."/>
            <person name="Saltikov C."/>
            <person name="Lowe T.M."/>
            <person name="Richardson P."/>
        </authorList>
    </citation>
    <scope>NUCLEOTIDE SEQUENCE [LARGE SCALE GENOMIC DNA]</scope>
    <source>
        <strain>ATCC 700994 / DSM 13514 / JCM 11321 / PZ6</strain>
    </source>
</reference>
<gene>
    <name evidence="2" type="primary">fen</name>
    <name type="ordered locus">Pars_2348</name>
</gene>
<dbReference type="EC" id="3.1.-.-" evidence="2"/>
<dbReference type="EMBL" id="CP000660">
    <property type="protein sequence ID" value="ABP51891.1"/>
    <property type="molecule type" value="Genomic_DNA"/>
</dbReference>
<dbReference type="RefSeq" id="WP_011901794.1">
    <property type="nucleotide sequence ID" value="NC_009376.1"/>
</dbReference>
<dbReference type="SMR" id="A4WNC4"/>
<dbReference type="STRING" id="340102.Pars_2348"/>
<dbReference type="GeneID" id="5056121"/>
<dbReference type="KEGG" id="pas:Pars_2348"/>
<dbReference type="HOGENOM" id="CLU_032444_0_0_2"/>
<dbReference type="OrthoDB" id="9593at2157"/>
<dbReference type="PhylomeDB" id="A4WNC4"/>
<dbReference type="Proteomes" id="UP000001567">
    <property type="component" value="Chromosome"/>
</dbReference>
<dbReference type="GO" id="GO:0008409">
    <property type="term" value="F:5'-3' exonuclease activity"/>
    <property type="evidence" value="ECO:0007669"/>
    <property type="project" value="UniProtKB-UniRule"/>
</dbReference>
<dbReference type="GO" id="GO:0017108">
    <property type="term" value="F:5'-flap endonuclease activity"/>
    <property type="evidence" value="ECO:0007669"/>
    <property type="project" value="UniProtKB-UniRule"/>
</dbReference>
<dbReference type="GO" id="GO:0003677">
    <property type="term" value="F:DNA binding"/>
    <property type="evidence" value="ECO:0007669"/>
    <property type="project" value="UniProtKB-UniRule"/>
</dbReference>
<dbReference type="GO" id="GO:0000287">
    <property type="term" value="F:magnesium ion binding"/>
    <property type="evidence" value="ECO:0007669"/>
    <property type="project" value="UniProtKB-UniRule"/>
</dbReference>
<dbReference type="GO" id="GO:0006281">
    <property type="term" value="P:DNA repair"/>
    <property type="evidence" value="ECO:0007669"/>
    <property type="project" value="UniProtKB-UniRule"/>
</dbReference>
<dbReference type="GO" id="GO:0043137">
    <property type="term" value="P:DNA replication, removal of RNA primer"/>
    <property type="evidence" value="ECO:0007669"/>
    <property type="project" value="UniProtKB-UniRule"/>
</dbReference>
<dbReference type="CDD" id="cd09867">
    <property type="entry name" value="PIN_FEN1"/>
    <property type="match status" value="1"/>
</dbReference>
<dbReference type="FunFam" id="1.10.150.20:FF:000087">
    <property type="entry name" value="Flap endonuclease 1"/>
    <property type="match status" value="1"/>
</dbReference>
<dbReference type="FunFam" id="3.40.50.1010:FF:000016">
    <property type="entry name" value="Flap endonuclease 1"/>
    <property type="match status" value="1"/>
</dbReference>
<dbReference type="Gene3D" id="1.10.150.20">
    <property type="entry name" value="5' to 3' exonuclease, C-terminal subdomain"/>
    <property type="match status" value="1"/>
</dbReference>
<dbReference type="Gene3D" id="3.40.50.1010">
    <property type="entry name" value="5'-nuclease"/>
    <property type="match status" value="1"/>
</dbReference>
<dbReference type="HAMAP" id="MF_00614">
    <property type="entry name" value="Fen"/>
    <property type="match status" value="1"/>
</dbReference>
<dbReference type="InterPro" id="IPR002421">
    <property type="entry name" value="5-3_exonuclease"/>
</dbReference>
<dbReference type="InterPro" id="IPR036279">
    <property type="entry name" value="5-3_exonuclease_C_sf"/>
</dbReference>
<dbReference type="InterPro" id="IPR023426">
    <property type="entry name" value="Flap_endonuc"/>
</dbReference>
<dbReference type="InterPro" id="IPR019973">
    <property type="entry name" value="Flap_endonuc_arc"/>
</dbReference>
<dbReference type="InterPro" id="IPR008918">
    <property type="entry name" value="HhH2"/>
</dbReference>
<dbReference type="InterPro" id="IPR029060">
    <property type="entry name" value="PIN-like_dom_sf"/>
</dbReference>
<dbReference type="InterPro" id="IPR006086">
    <property type="entry name" value="XPG-I_dom"/>
</dbReference>
<dbReference type="InterPro" id="IPR006084">
    <property type="entry name" value="XPG/Rad2"/>
</dbReference>
<dbReference type="InterPro" id="IPR019974">
    <property type="entry name" value="XPG_CS"/>
</dbReference>
<dbReference type="InterPro" id="IPR006085">
    <property type="entry name" value="XPG_DNA_repair_N"/>
</dbReference>
<dbReference type="NCBIfam" id="TIGR03674">
    <property type="entry name" value="fen_arch"/>
    <property type="match status" value="1"/>
</dbReference>
<dbReference type="PANTHER" id="PTHR11081:SF9">
    <property type="entry name" value="FLAP ENDONUCLEASE 1"/>
    <property type="match status" value="1"/>
</dbReference>
<dbReference type="PANTHER" id="PTHR11081">
    <property type="entry name" value="FLAP ENDONUCLEASE FAMILY MEMBER"/>
    <property type="match status" value="1"/>
</dbReference>
<dbReference type="Pfam" id="PF00867">
    <property type="entry name" value="XPG_I"/>
    <property type="match status" value="1"/>
</dbReference>
<dbReference type="Pfam" id="PF00752">
    <property type="entry name" value="XPG_N"/>
    <property type="match status" value="1"/>
</dbReference>
<dbReference type="PRINTS" id="PR00853">
    <property type="entry name" value="XPGRADSUPER"/>
</dbReference>
<dbReference type="SMART" id="SM00475">
    <property type="entry name" value="53EXOc"/>
    <property type="match status" value="1"/>
</dbReference>
<dbReference type="SMART" id="SM00279">
    <property type="entry name" value="HhH2"/>
    <property type="match status" value="1"/>
</dbReference>
<dbReference type="SMART" id="SM00484">
    <property type="entry name" value="XPGI"/>
    <property type="match status" value="1"/>
</dbReference>
<dbReference type="SMART" id="SM00485">
    <property type="entry name" value="XPGN"/>
    <property type="match status" value="1"/>
</dbReference>
<dbReference type="SUPFAM" id="SSF47807">
    <property type="entry name" value="5' to 3' exonuclease, C-terminal subdomain"/>
    <property type="match status" value="1"/>
</dbReference>
<dbReference type="SUPFAM" id="SSF88723">
    <property type="entry name" value="PIN domain-like"/>
    <property type="match status" value="1"/>
</dbReference>
<dbReference type="PROSITE" id="PS00841">
    <property type="entry name" value="XPG_1"/>
    <property type="match status" value="1"/>
</dbReference>
<sequence length="346" mass="38993">MGVTELGKLIGKEARREVKLEALAGRCVALDAYNALYQFLASIRQPDGTPLMDRAGRITSHISGLFYRTINLMEAGIKPVYVFDGKPPEFKLAEIEERRKAKEKATEELVRAIKEGRRDEVAKYAKRAIFLTNEMVEDAKKLLTYMGVPWVQAPSEGEAQAAYMARRGHCWAVGSQDYDSLLFGSPRLVRNLATSPKRKVGDEVVELSPEIIELDAVLKSLRLRSREQLIDLAILLGTDYNPDGVPGIGPQRALKLIWEFGSLEKLLDTVLRGVTFPIDPVEIKRFFLNPPVTDTYTTDVTKPDDAKLRDFLVHEHDFGEERVERALERLKKAMGKLRTSALDSFF</sequence>
<protein>
    <recommendedName>
        <fullName evidence="2">Flap endonuclease 1</fullName>
        <shortName evidence="2">FEN-1</shortName>
        <ecNumber evidence="2">3.1.-.-</ecNumber>
    </recommendedName>
    <alternativeName>
        <fullName evidence="2">Flap structure-specific endonuclease 1</fullName>
    </alternativeName>
</protein>
<comment type="function">
    <text evidence="1">Structure-specific nuclease with 5'-flap endonuclease and 5'-3' exonuclease activities involved in DNA replication and repair. During DNA replication, cleaves the 5'-overhanging flap structure that is generated by displacement synthesis when DNA polymerase encounters the 5'-end of a downstream Okazaki fragment. Binds the unpaired 3'-DNA end and kinks the DNA to facilitate 5' cleavage specificity. Cleaves one nucleotide into the double-stranded DNA from the junction in flap DNA, leaving a nick for ligation. Also involved in the base excision repair (BER) pathway. Acts as a genome stabilization factor that prevents flaps from equilibrating into structures that lead to duplications and deletions. Also possesses 5'-3' exonuclease activity on nicked or gapped double-stranded DNA (By similarity).</text>
</comment>
<comment type="cofactor">
    <cofactor evidence="2">
        <name>Mg(2+)</name>
        <dbReference type="ChEBI" id="CHEBI:18420"/>
    </cofactor>
    <text evidence="2">Binds 2 magnesium ions per subunit. They probably participate in the reaction catalyzed by the enzyme. May bind an additional third magnesium ion after substrate binding.</text>
</comment>
<comment type="subunit">
    <text evidence="2">Interacts with PCNA. PCNA stimulates the nuclease activity without altering cleavage specificity.</text>
</comment>
<comment type="similarity">
    <text evidence="2">Belongs to the XPG/RAD2 endonuclease family. FEN1 subfamily.</text>
</comment>
<feature type="chain" id="PRO_1000061330" description="Flap endonuclease 1">
    <location>
        <begin position="1"/>
        <end position="346"/>
    </location>
</feature>
<feature type="region of interest" description="N-domain">
    <location>
        <begin position="1"/>
        <end position="102"/>
    </location>
</feature>
<feature type="region of interest" description="I-domain">
    <location>
        <begin position="120"/>
        <end position="261"/>
    </location>
</feature>
<feature type="binding site" evidence="2">
    <location>
        <position position="31"/>
    </location>
    <ligand>
        <name>Mg(2+)</name>
        <dbReference type="ChEBI" id="CHEBI:18420"/>
        <label>1</label>
    </ligand>
</feature>
<feature type="binding site" evidence="2">
    <location>
        <position position="84"/>
    </location>
    <ligand>
        <name>Mg(2+)</name>
        <dbReference type="ChEBI" id="CHEBI:18420"/>
        <label>1</label>
    </ligand>
</feature>
<feature type="binding site" evidence="2">
    <location>
        <position position="156"/>
    </location>
    <ligand>
        <name>Mg(2+)</name>
        <dbReference type="ChEBI" id="CHEBI:18420"/>
        <label>1</label>
    </ligand>
</feature>
<feature type="binding site" evidence="2">
    <location>
        <position position="158"/>
    </location>
    <ligand>
        <name>Mg(2+)</name>
        <dbReference type="ChEBI" id="CHEBI:18420"/>
        <label>1</label>
    </ligand>
</feature>
<feature type="binding site" evidence="2">
    <location>
        <position position="177"/>
    </location>
    <ligand>
        <name>Mg(2+)</name>
        <dbReference type="ChEBI" id="CHEBI:18420"/>
        <label>2</label>
    </ligand>
</feature>
<feature type="binding site" evidence="2">
    <location>
        <position position="179"/>
    </location>
    <ligand>
        <name>Mg(2+)</name>
        <dbReference type="ChEBI" id="CHEBI:18420"/>
        <label>2</label>
    </ligand>
</feature>
<feature type="binding site" evidence="2">
    <location>
        <position position="239"/>
    </location>
    <ligand>
        <name>Mg(2+)</name>
        <dbReference type="ChEBI" id="CHEBI:18420"/>
        <label>2</label>
    </ligand>
</feature>
<proteinExistence type="inferred from homology"/>
<evidence type="ECO:0000250" key="1"/>
<evidence type="ECO:0000255" key="2">
    <source>
        <dbReference type="HAMAP-Rule" id="MF_00614"/>
    </source>
</evidence>
<name>FEN_PYRAR</name>
<keyword id="KW-0227">DNA damage</keyword>
<keyword id="KW-0234">DNA repair</keyword>
<keyword id="KW-0235">DNA replication</keyword>
<keyword id="KW-0255">Endonuclease</keyword>
<keyword id="KW-0269">Exonuclease</keyword>
<keyword id="KW-0378">Hydrolase</keyword>
<keyword id="KW-0460">Magnesium</keyword>
<keyword id="KW-0479">Metal-binding</keyword>
<keyword id="KW-0540">Nuclease</keyword>
<organism>
    <name type="scientific">Pyrobaculum arsenaticum (strain DSM 13514 / JCM 11321 / PZ6)</name>
    <dbReference type="NCBI Taxonomy" id="340102"/>
    <lineage>
        <taxon>Archaea</taxon>
        <taxon>Thermoproteota</taxon>
        <taxon>Thermoprotei</taxon>
        <taxon>Thermoproteales</taxon>
        <taxon>Thermoproteaceae</taxon>
        <taxon>Pyrobaculum</taxon>
    </lineage>
</organism>